<proteinExistence type="evidence at transcript level"/>
<evidence type="ECO:0000256" key="1">
    <source>
        <dbReference type="SAM" id="MobiDB-lite"/>
    </source>
</evidence>
<evidence type="ECO:0000269" key="2">
    <source>
    </source>
</evidence>
<evidence type="ECO:0000303" key="3">
    <source>
    </source>
</evidence>
<evidence type="ECO:0000305" key="4">
    <source>
    </source>
</evidence>
<sequence>MFCLNTFKSRWPREFQNLKKKKKKTCVKLSIPIRSVTGDAASLTVVVTMYKRDDYVRNKPGGVFSRWQGFARSMLLPKPFSETAELRRTVADYSLISRGLAPKILREAKGNREDLRVGKDFVGSRYRVQESIQGLGVAVNIHDADDISHGQTESIRTRLRSYGRPVPLLKKLGDNASQTITQKKTGGRSKDKKHGFEEERDVSRVEAEENNTNSVHASVLRLSRSRPQPVLERHDDIVDGSDSASVCGVLQEDGTTCLTAPVTGRKRCTEHKGQRITCAPPVKNPPCEEETEEICGVILPEMVRCRSKPVSGRKRCEDHKGMRVNAFFFLLNPTERDKILKEDKSKPKTRTSSTNQEEPGESLICEATTKNGLPCTRSAPNGSKRCWQHKDETVDQKSSENVQTSTTVCGVKLHNGSVCEKTPVKGRKRCQEHKGMRITS</sequence>
<gene>
    <name evidence="3" type="primary">ET</name>
</gene>
<name>ET_BRANA</name>
<keyword id="KW-0238">DNA-binding</keyword>
<keyword id="KW-0539">Nucleus</keyword>
<keyword id="KW-0677">Repeat</keyword>
<keyword id="KW-0804">Transcription</keyword>
<keyword id="KW-0805">Transcription regulation</keyword>
<organism>
    <name type="scientific">Brassica napus</name>
    <name type="common">Rape</name>
    <dbReference type="NCBI Taxonomy" id="3708"/>
    <lineage>
        <taxon>Eukaryota</taxon>
        <taxon>Viridiplantae</taxon>
        <taxon>Streptophyta</taxon>
        <taxon>Embryophyta</taxon>
        <taxon>Tracheophyta</taxon>
        <taxon>Spermatophyta</taxon>
        <taxon>Magnoliopsida</taxon>
        <taxon>eudicotyledons</taxon>
        <taxon>Gunneridae</taxon>
        <taxon>Pentapetalae</taxon>
        <taxon>rosids</taxon>
        <taxon>malvids</taxon>
        <taxon>Brassicales</taxon>
        <taxon>Brassicaceae</taxon>
        <taxon>Brassiceae</taxon>
        <taxon>Brassica</taxon>
    </lineage>
</organism>
<reference key="1">
    <citation type="journal article" date="2005" name="Plant Mol. Biol.">
        <title>Ectopic expression of EFFECTOR OF TRANSCRIPTION perturbs gibberellin-mediated plant developmental processes.</title>
        <authorList>
            <person name="Ellerstrom M."/>
            <person name="Reidt W."/>
            <person name="Ivanov R."/>
            <person name="Tiedemann J."/>
            <person name="Melzer M."/>
            <person name="Tewes A."/>
            <person name="Moritz T."/>
            <person name="Mock H.P."/>
            <person name="Sitbon F."/>
            <person name="Rask L."/>
            <person name="Baumlein H."/>
        </authorList>
    </citation>
    <scope>NUCLEOTIDE SEQUENCE [MRNA]</scope>
    <scope>FUNCTION</scope>
    <scope>SUBCELLULAR LOCATION</scope>
    <scope>NUCLEAR LOCALIZATION SIGNAL</scope>
    <scope>GIY-YIG DOMAIN</scope>
    <source>
        <strain>cv. Svalofs Karat 20516-K</strain>
    </source>
</reference>
<protein>
    <recommendedName>
        <fullName evidence="3">Protein EFFECTOR OF TRANSCRIPTION</fullName>
        <shortName evidence="3">BnET</shortName>
    </recommendedName>
</protein>
<dbReference type="EMBL" id="AY533506">
    <property type="protein sequence ID" value="AAT00536.1"/>
    <property type="molecule type" value="mRNA"/>
</dbReference>
<dbReference type="GO" id="GO:0005634">
    <property type="term" value="C:nucleus"/>
    <property type="evidence" value="ECO:0007669"/>
    <property type="project" value="UniProtKB-SubCell"/>
</dbReference>
<dbReference type="GO" id="GO:0003677">
    <property type="term" value="F:DNA binding"/>
    <property type="evidence" value="ECO:0000250"/>
    <property type="project" value="UniProtKB"/>
</dbReference>
<dbReference type="GO" id="GO:0006355">
    <property type="term" value="P:regulation of DNA-templated transcription"/>
    <property type="evidence" value="ECO:0007669"/>
    <property type="project" value="InterPro"/>
</dbReference>
<dbReference type="InterPro" id="IPR038909">
    <property type="entry name" value="Effector_transcript"/>
</dbReference>
<dbReference type="PANTHER" id="PTHR35133:SF4">
    <property type="entry name" value="PROTEIN EFFECTOR OF TRANSCRIPTION 1"/>
    <property type="match status" value="1"/>
</dbReference>
<dbReference type="PANTHER" id="PTHR35133">
    <property type="entry name" value="PROTEIN EFFECTOR OF TRANSCRIPTION 2-RELATED"/>
    <property type="match status" value="1"/>
</dbReference>
<feature type="chain" id="PRO_0000436017" description="Protein EFFECTOR OF TRANSCRIPTION">
    <location>
        <begin position="1"/>
        <end position="440"/>
    </location>
</feature>
<feature type="domain" description="GIY-YIG" evidence="4">
    <location>
        <begin position="131"/>
        <end position="167"/>
    </location>
</feature>
<feature type="repeat" description="Cx9Cx9RCx2HK" evidence="4">
    <location>
        <begin position="247"/>
        <end position="272"/>
    </location>
</feature>
<feature type="repeat" description="Cx9Cx9RCx2HK" evidence="4">
    <location>
        <begin position="295"/>
        <end position="320"/>
    </location>
</feature>
<feature type="repeat" description="Cx9Cx9RCx2HK" evidence="4">
    <location>
        <begin position="365"/>
        <end position="390"/>
    </location>
</feature>
<feature type="repeat" description="Cx9Cx9RCx2HK" evidence="4">
    <location>
        <begin position="409"/>
        <end position="434"/>
    </location>
</feature>
<feature type="region of interest" description="Disordered" evidence="1">
    <location>
        <begin position="172"/>
        <end position="216"/>
    </location>
</feature>
<feature type="region of interest" description="Disordered" evidence="1">
    <location>
        <begin position="339"/>
        <end position="363"/>
    </location>
</feature>
<feature type="compositionally biased region" description="Polar residues" evidence="1">
    <location>
        <begin position="175"/>
        <end position="184"/>
    </location>
</feature>
<feature type="compositionally biased region" description="Basic and acidic residues" evidence="1">
    <location>
        <begin position="194"/>
        <end position="207"/>
    </location>
</feature>
<accession>A2RQG7</accession>
<comment type="function">
    <text evidence="2">Transcription regulator that negatively modulates gibberellin-mediated developmental processes. May act as transcriptional repressor of giberellin controlled genes. Binds DNA without sequence preference.</text>
</comment>
<comment type="subcellular location">
    <subcellularLocation>
        <location evidence="2">Nucleus</location>
    </subcellularLocation>
</comment>
<comment type="domain">
    <text evidence="4">Contains a bacterial GIY-YIG-like domain.</text>
</comment>
<comment type="miscellaneous">
    <text evidence="2">Plants over-expressing ET display dwarfism due to short internodes, late flowering, reduced germination rate, increased anthocyanin content and reduced xylem lignification.</text>
</comment>